<gene>
    <name type="primary">ART10</name>
    <name type="ORF">SCY_3945</name>
</gene>
<feature type="chain" id="PRO_0000402198" description="Arrestin-related trafficking adapter 10">
    <location>
        <begin position="1"/>
        <end position="518"/>
    </location>
</feature>
<feature type="cross-link" description="Glycyl lysine isopeptide (Lys-Gly) (interchain with G-Cter in ubiquitin)" evidence="2">
    <location>
        <position position="118"/>
    </location>
</feature>
<accession>A7A1R7</accession>
<evidence type="ECO:0000250" key="1"/>
<evidence type="ECO:0000250" key="2">
    <source>
        <dbReference type="UniProtKB" id="P18634"/>
    </source>
</evidence>
<evidence type="ECO:0000305" key="3"/>
<protein>
    <recommendedName>
        <fullName>Arrestin-related trafficking adapter 10</fullName>
    </recommendedName>
</protein>
<keyword id="KW-0963">Cytoplasm</keyword>
<keyword id="KW-0254">Endocytosis</keyword>
<keyword id="KW-1017">Isopeptide bond</keyword>
<keyword id="KW-0832">Ubl conjugation</keyword>
<sequence>MAPKISISLNPPYNGEFYSSNDQMSGIVSLQLTKALSIRKISVILKGFSETLTKIDQEYMFQQNGMMMPGQDNKSFHTLMKFEQRVFPPDNVWNALDGSSKPFKVKPGSYNYSFQFDKFPRKPECLKNHTAKTVAFVTRSNARLPPTFNSHWQEFNKIDNLDLYFYSFGKVIYMVQVQIELGKSSSWFKPFHKLIREIETFEFIPEPKDLIIEPDEDDNEELNAFSNNSRGNSMVTNNEFFNSSNLKVPSKDVKVVNGVGYIKSDRNFSQANSILIENGDIRSRPVSSVTSTRQSTRLVNGMKVFPSTYKMGLPDGESNMRIEVRSRDLKQIYRKDYLFRSGSQNFDKVYVVMEGNIASLSKMQITPLKLQLNLLETTTYLSQGIANGNYSSLKLIEIDLNQLKSNKPLLDLNEIRENFDGSMFECELRLKDHPILRKLVFNEEDYRHRGNRLYSFKTCTIKRIFSLQLLIEWGINGIRKQSEVNIDPVQIFCQVREHVEAEALPRYVPPPTYTEMAS</sequence>
<organism>
    <name type="scientific">Saccharomyces cerevisiae (strain YJM789)</name>
    <name type="common">Baker's yeast</name>
    <dbReference type="NCBI Taxonomy" id="307796"/>
    <lineage>
        <taxon>Eukaryota</taxon>
        <taxon>Fungi</taxon>
        <taxon>Dikarya</taxon>
        <taxon>Ascomycota</taxon>
        <taxon>Saccharomycotina</taxon>
        <taxon>Saccharomycetes</taxon>
        <taxon>Saccharomycetales</taxon>
        <taxon>Saccharomycetaceae</taxon>
        <taxon>Saccharomyces</taxon>
    </lineage>
</organism>
<proteinExistence type="inferred from homology"/>
<name>ART10_YEAS7</name>
<reference key="1">
    <citation type="journal article" date="2007" name="Proc. Natl. Acad. Sci. U.S.A.">
        <title>Genome sequencing and comparative analysis of Saccharomyces cerevisiae strain YJM789.</title>
        <authorList>
            <person name="Wei W."/>
            <person name="McCusker J.H."/>
            <person name="Hyman R.W."/>
            <person name="Jones T."/>
            <person name="Ning Y."/>
            <person name="Cao Z."/>
            <person name="Gu Z."/>
            <person name="Bruno D."/>
            <person name="Miranda M."/>
            <person name="Nguyen M."/>
            <person name="Wilhelmy J."/>
            <person name="Komp C."/>
            <person name="Tamse R."/>
            <person name="Wang X."/>
            <person name="Jia P."/>
            <person name="Luedi P."/>
            <person name="Oefner P.J."/>
            <person name="David L."/>
            <person name="Dietrich F.S."/>
            <person name="Li Y."/>
            <person name="Davis R.W."/>
            <person name="Steinmetz L.M."/>
        </authorList>
    </citation>
    <scope>NUCLEOTIDE SEQUENCE [LARGE SCALE GENOMIC DNA]</scope>
    <source>
        <strain>YJM789</strain>
    </source>
</reference>
<dbReference type="EMBL" id="AAFW02000171">
    <property type="protein sequence ID" value="EDN59295.1"/>
    <property type="molecule type" value="Genomic_DNA"/>
</dbReference>
<dbReference type="HOGENOM" id="CLU_540776_0_0_1"/>
<dbReference type="Proteomes" id="UP000007060">
    <property type="component" value="Unassembled WGS sequence"/>
</dbReference>
<dbReference type="GO" id="GO:0005737">
    <property type="term" value="C:cytoplasm"/>
    <property type="evidence" value="ECO:0007669"/>
    <property type="project" value="UniProtKB-SubCell"/>
</dbReference>
<dbReference type="GO" id="GO:0006897">
    <property type="term" value="P:endocytosis"/>
    <property type="evidence" value="ECO:0007669"/>
    <property type="project" value="UniProtKB-KW"/>
</dbReference>
<dbReference type="CDD" id="cd22952">
    <property type="entry name" value="ART10-like"/>
    <property type="match status" value="1"/>
</dbReference>
<dbReference type="FunFam" id="2.60.40.640:FF:000038">
    <property type="entry name" value="Arrestin-related trafficking adapter 10"/>
    <property type="match status" value="1"/>
</dbReference>
<dbReference type="Gene3D" id="2.60.40.640">
    <property type="match status" value="1"/>
</dbReference>
<dbReference type="InterPro" id="IPR014752">
    <property type="entry name" value="Arrestin-like_C"/>
</dbReference>
<comment type="function">
    <text evidence="1">May regulate endocytosis by recruiting RSP5 ubiquitin ligase activity to specific plasma membrane proteins in response to extracellular stimuli.</text>
</comment>
<comment type="subunit">
    <text evidence="1">Interacts with RSP5.</text>
</comment>
<comment type="subcellular location">
    <subcellularLocation>
        <location evidence="1">Cytoplasm</location>
    </subcellularLocation>
</comment>
<comment type="PTM">
    <text evidence="1">Ubiquitinated by RSP5.</text>
</comment>
<comment type="similarity">
    <text evidence="3">Belongs to the ART10 family.</text>
</comment>